<gene>
    <name type="primary">G</name>
</gene>
<reference key="1">
    <citation type="submission" date="2006-08" db="EMBL/GenBank/DDBJ databases">
        <authorList>
            <person name="Zhao Y.J."/>
            <person name="Guo L."/>
            <person name="Huang Y."/>
            <person name="Qian A.D."/>
        </authorList>
    </citation>
    <scope>NUCLEOTIDE SEQUENCE [GENOMIC RNA]</scope>
</reference>
<proteinExistence type="evidence at protein level"/>
<organismHost>
    <name type="scientific">Homo sapiens</name>
    <name type="common">Human</name>
    <dbReference type="NCBI Taxonomy" id="9606"/>
</organismHost>
<organismHost>
    <name type="scientific">Mammalia</name>
    <dbReference type="NCBI Taxonomy" id="40674"/>
</organismHost>
<accession>Q0GBY1</accession>
<comment type="function">
    <text evidence="1 2">Attaches the virus to host cellular receptor, inducing endocytosis of the virion by using different host proteins including TFRC, GRM2 and ITGB1 (By similarity). In the endosome, the acidic pH induces conformational changes in the glycoprotein trimer, which trigger fusion between virus and cell membrane. There is convincing in vitro evidence that the muscular form of the nicotinic acetylcholine receptor (nAChR), the neuronal cell adhesion molecule (NCAM), and the p75 neurotrophin receptor (p75NTR) bind glycoprotein and thereby facilitate rabies virus entry into cells (By similarity).</text>
</comment>
<comment type="subunit">
    <text evidence="1 2">Homotrimer (By similarity). Interacts with matrix protein (By similarity). Interacts with host TRFC. Interacts with host BST2; this interaction inhibits viral budding by tethering new virions to the cell surface. Interacts with ITGB1. Interacts with host GRM2 (By similarity).</text>
</comment>
<comment type="subcellular location">
    <subcellularLocation>
        <location evidence="5">Virion membrane</location>
        <topology evidence="5">Single-pass type I membrane protein</topology>
    </subcellularLocation>
</comment>
<comment type="PTM">
    <text evidence="1">Glycosylated and palmitoylated by host. Glycosylation is crucial for glycoprotein export at the cell surface (By similarity).</text>
</comment>
<comment type="biotechnology">
    <text>Primary surface antigen capable of inducing and reacting with virus-neutralizing antibodies. Almost all human and veterinary vaccines are based on the functional aspects of the G protein.</text>
</comment>
<comment type="miscellaneous">
    <text evidence="1">Arg-352 is highly involved in rabies virus pathogenicity. Its mutation dramatically attenuates the virus (By similarity).</text>
</comment>
<comment type="similarity">
    <text evidence="5">Belongs to the lyssavirus glycoprotein family.</text>
</comment>
<sequence length="524" mass="58868">MVPQVLLFVLLLGFSLCFGKFPIYTIPDELGPWSPIDIHHLSCPNNLVVEDEGCTNLSEFSYMELKVGYISAIKVNGFTCTGVVTEAETYTNFVGYVTTTFKRKHFRPTPDACRAAYNWKMAGDPRYEESLHNPYPDYHWLRTVRTTKESLIIISPSVTDLDPYDKSLHSRVFPGRKCSGITVSSTYCSTNHDYTIWMPENPRPRTPCDIFTNSRGKRASNGNKTCGFVDERGLYKSLKGACRLKLCGVLGLRLMDGTWVAMQTSGETKWCPPDQLVNLHDFRSDEIEHLVVEELVKKREECLDALESIMTTKSVSFRRLSHLRKLVPGFGKAYTIFNKTLMEADAHYKSVRTWNEIIPSKGCLKVGGRCHPHVNGVFFNGLILGPDDHVLIPEMQSSLLQQHMELLESSVIPLMHPLADPSTVFKEGDEAEDFVEVHLPDVYKQISGVDLGLPNWGKYVLMTAGAMIGLVLIFSLMTWCRRANRPESKQRSFGGTGGNVSVTSQSGKVIPSWESYKSGGEIRL</sequence>
<feature type="signal peptide" evidence="3">
    <location>
        <begin position="1"/>
        <end position="19"/>
    </location>
</feature>
<feature type="chain" id="PRO_0000295803" description="Glycoprotein">
    <location>
        <begin position="20"/>
        <end position="524"/>
    </location>
</feature>
<feature type="topological domain" description="Virion surface" evidence="3">
    <location>
        <begin position="20"/>
        <end position="459"/>
    </location>
</feature>
<feature type="transmembrane region" description="Helical" evidence="3">
    <location>
        <begin position="460"/>
        <end position="480"/>
    </location>
</feature>
<feature type="topological domain" description="Intravirion" evidence="3">
    <location>
        <begin position="481"/>
        <end position="524"/>
    </location>
</feature>
<feature type="region of interest" description="Disordered" evidence="4">
    <location>
        <begin position="487"/>
        <end position="506"/>
    </location>
</feature>
<feature type="lipid moiety-binding region" description="S-palmitoyl cysteine; by host" evidence="1">
    <location>
        <position position="480"/>
    </location>
</feature>
<feature type="glycosylation site" description="N-linked (GlcNAc...) asparagine; by host" evidence="1">
    <location>
        <position position="56"/>
    </location>
</feature>
<feature type="glycosylation site" description="N-linked (GlcNAc...) asparagine; by host" evidence="3">
    <location>
        <position position="223"/>
    </location>
</feature>
<feature type="glycosylation site" description="N-linked (GlcNAc...) asparagine; by host" evidence="1">
    <location>
        <position position="338"/>
    </location>
</feature>
<feature type="disulfide bond" evidence="2">
    <location>
        <begin position="43"/>
        <end position="302"/>
    </location>
</feature>
<feature type="disulfide bond" evidence="2">
    <location>
        <begin position="54"/>
        <end position="226"/>
    </location>
</feature>
<feature type="disulfide bond" evidence="2">
    <location>
        <begin position="80"/>
        <end position="113"/>
    </location>
</feature>
<feature type="disulfide bond" evidence="2">
    <location>
        <begin position="178"/>
        <end position="188"/>
    </location>
</feature>
<feature type="disulfide bond" evidence="2">
    <location>
        <begin position="208"/>
        <end position="247"/>
    </location>
</feature>
<feature type="disulfide bond" evidence="2">
    <location>
        <begin position="242"/>
        <end position="271"/>
    </location>
</feature>
<feature type="disulfide bond" evidence="2">
    <location>
        <begin position="363"/>
        <end position="370"/>
    </location>
</feature>
<protein>
    <recommendedName>
        <fullName>Glycoprotein</fullName>
    </recommendedName>
</protein>
<evidence type="ECO:0000250" key="1"/>
<evidence type="ECO:0000250" key="2">
    <source>
        <dbReference type="UniProtKB" id="P08667"/>
    </source>
</evidence>
<evidence type="ECO:0000255" key="3"/>
<evidence type="ECO:0000256" key="4">
    <source>
        <dbReference type="SAM" id="MobiDB-lite"/>
    </source>
</evidence>
<evidence type="ECO:0000305" key="5"/>
<name>GLYCO_RABVR</name>
<dbReference type="EMBL" id="DQ875050">
    <property type="protein sequence ID" value="ABI47940.1"/>
    <property type="molecule type" value="Other_RNA"/>
</dbReference>
<dbReference type="SMR" id="Q0GBY1"/>
<dbReference type="GlyCosmos" id="Q0GBY1">
    <property type="glycosylation" value="3 sites, No reported glycans"/>
</dbReference>
<dbReference type="Proteomes" id="UP000008650">
    <property type="component" value="Genome"/>
</dbReference>
<dbReference type="GO" id="GO:0016020">
    <property type="term" value="C:membrane"/>
    <property type="evidence" value="ECO:0007669"/>
    <property type="project" value="UniProtKB-KW"/>
</dbReference>
<dbReference type="GO" id="GO:0019031">
    <property type="term" value="C:viral envelope"/>
    <property type="evidence" value="ECO:0007669"/>
    <property type="project" value="UniProtKB-KW"/>
</dbReference>
<dbReference type="GO" id="GO:0036338">
    <property type="term" value="C:viral membrane"/>
    <property type="evidence" value="ECO:0000250"/>
    <property type="project" value="UniProtKB"/>
</dbReference>
<dbReference type="GO" id="GO:0055036">
    <property type="term" value="C:virion membrane"/>
    <property type="evidence" value="ECO:0007669"/>
    <property type="project" value="UniProtKB-SubCell"/>
</dbReference>
<dbReference type="GO" id="GO:0098670">
    <property type="term" value="P:entry receptor-mediated virion attachment to host cell"/>
    <property type="evidence" value="ECO:0000250"/>
    <property type="project" value="UniProtKB"/>
</dbReference>
<dbReference type="GO" id="GO:0039654">
    <property type="term" value="P:fusion of virus membrane with host endosome membrane"/>
    <property type="evidence" value="ECO:0000250"/>
    <property type="project" value="UniProtKB"/>
</dbReference>
<dbReference type="Gene3D" id="2.30.29.130">
    <property type="match status" value="1"/>
</dbReference>
<dbReference type="InterPro" id="IPR055448">
    <property type="entry name" value="PH_Rhabdo_glycop"/>
</dbReference>
<dbReference type="InterPro" id="IPR055447">
    <property type="entry name" value="Rhabdo_glycop_CD"/>
</dbReference>
<dbReference type="InterPro" id="IPR001903">
    <property type="entry name" value="Rhabdo_glycop_FD"/>
</dbReference>
<dbReference type="Pfam" id="PF24834">
    <property type="entry name" value="PH_Rhabdo_glycop"/>
    <property type="match status" value="1"/>
</dbReference>
<dbReference type="Pfam" id="PF24833">
    <property type="entry name" value="Rhabdo_glycop_CD"/>
    <property type="match status" value="1"/>
</dbReference>
<dbReference type="Pfam" id="PF00974">
    <property type="entry name" value="Rhabdo_glycop_FD"/>
    <property type="match status" value="1"/>
</dbReference>
<dbReference type="SUPFAM" id="SSF161008">
    <property type="entry name" value="Viral glycoprotein ectodomain-like"/>
    <property type="match status" value="1"/>
</dbReference>
<organism>
    <name type="scientific">Rabies virus (strain China/MRV)</name>
    <name type="common">RABV</name>
    <dbReference type="NCBI Taxonomy" id="445791"/>
    <lineage>
        <taxon>Viruses</taxon>
        <taxon>Riboviria</taxon>
        <taxon>Orthornavirae</taxon>
        <taxon>Negarnaviricota</taxon>
        <taxon>Haploviricotina</taxon>
        <taxon>Monjiviricetes</taxon>
        <taxon>Mononegavirales</taxon>
        <taxon>Rhabdoviridae</taxon>
        <taxon>Alpharhabdovirinae</taxon>
        <taxon>Lyssavirus</taxon>
        <taxon>Lyssavirus rabies</taxon>
    </lineage>
</organism>
<keyword id="KW-1015">Disulfide bond</keyword>
<keyword id="KW-0325">Glycoprotein</keyword>
<keyword id="KW-0449">Lipoprotein</keyword>
<keyword id="KW-0472">Membrane</keyword>
<keyword id="KW-0564">Palmitate</keyword>
<keyword id="KW-0732">Signal</keyword>
<keyword id="KW-0812">Transmembrane</keyword>
<keyword id="KW-1133">Transmembrane helix</keyword>
<keyword id="KW-0261">Viral envelope protein</keyword>
<keyword id="KW-0946">Virion</keyword>